<organism>
    <name type="scientific">Homo sapiens</name>
    <name type="common">Human</name>
    <dbReference type="NCBI Taxonomy" id="9606"/>
    <lineage>
        <taxon>Eukaryota</taxon>
        <taxon>Metazoa</taxon>
        <taxon>Chordata</taxon>
        <taxon>Craniata</taxon>
        <taxon>Vertebrata</taxon>
        <taxon>Euteleostomi</taxon>
        <taxon>Mammalia</taxon>
        <taxon>Eutheria</taxon>
        <taxon>Euarchontoglires</taxon>
        <taxon>Primates</taxon>
        <taxon>Haplorrhini</taxon>
        <taxon>Catarrhini</taxon>
        <taxon>Hominidae</taxon>
        <taxon>Homo</taxon>
    </lineage>
</organism>
<comment type="function">
    <text evidence="1">May be involved in transcriptional regulation.</text>
</comment>
<comment type="subcellular location">
    <subcellularLocation>
        <location evidence="1">Nucleus</location>
    </subcellularLocation>
</comment>
<comment type="similarity">
    <text evidence="4">Belongs to the krueppel C2H2-type zinc-finger protein family.</text>
</comment>
<name>ZN845_HUMAN</name>
<evidence type="ECO:0000250" key="1"/>
<evidence type="ECO:0000255" key="2">
    <source>
        <dbReference type="PROSITE-ProRule" id="PRU00042"/>
    </source>
</evidence>
<evidence type="ECO:0000255" key="3">
    <source>
        <dbReference type="PROSITE-ProRule" id="PRU00119"/>
    </source>
</evidence>
<evidence type="ECO:0000305" key="4"/>
<evidence type="ECO:0007744" key="5">
    <source>
    </source>
</evidence>
<protein>
    <recommendedName>
        <fullName>Zinc finger protein 845</fullName>
    </recommendedName>
</protein>
<gene>
    <name type="primary">ZNF845</name>
</gene>
<sequence length="970" mass="113133">MALSQGLLTFRDVAIEFSQEEWKCLDPAQRTLYRDVMLENYRNLVSLDISSKCMMKEFSSTAQGNTEVIHTGTLQRHERHHIGDFCFQEMEKDIHDFEFQWKEDERNSHEAPMTEIKQLTGSTNRHDQRHAGNKPIKDQLGSSFHSHLPELHMFQTEGKIGNQVEKSINSASLVSTSQRISCRPKTHISKNYGNNFLNSSLLTQKQEVHMREKSFQCNESGKAFNYSSVLRKHQIIHLGAKQYKCDVCGKVFNQKRYLACHRRCHTGKKPYKCNDCGKTFSQELTLTCHHRLHTGEKHYKCSECGKTFSRNSALVIHKAIHTGEKSYKCNECGKTFSQTSYLVYHRRLHTGEKPYKCEECDKAFSFKSNLERHRKIHTGEKPYKCNECSRTFSRKSSLTRHRRLHTGEKPYKCNDCGKTFSQMSSLVYHRRLHTGEKPYKCEECDEAFSFKSNLERHRRIHTGEKPYKCNDCGKTFSQTSSLVYHRRLHTGEKPYKCEECDEAFSFKSNLERHRIIHTGEKLYKCNECGKTFSRKSSLTRHCRLHTGEKPYQCNECGKAFRGQSALIYHQAIHGIGKLYKCNDCHQVFSNATTIANHWRIHNEERSYKCNRCGKFFRHRSYLAVHWRTHSGEKPYKCEECDEAFSFKSNLQRHRRIHTGEKPYRCNECGKTFSRKSYLTCHRRLHTGEKPYKCNECGKTFGRNSALIIHKAIHTGEKPYKCNECGKAFSQKSSLTCHLRLHTGEKPYKCEECDKVFSRKSSLEKHRRIHTGEKPYKCKVCDKAFGRDSHLAQHTRIHTGEKPYKCNECGKNFRHNSALVIHKAIHSGEKPYKCNECGKTFRHNSALEIHKAIHTGEKPYKCSECGKVFNRKANLSRHHRLHTGEKPYKCNKCGKVFNQQAHLACHHRIHTGEKPYKCNECGKTFRHNSVLVIHKTIHTGEKPYKCNECGKVFNRKAKLARHHRIHTGKKH</sequence>
<reference key="1">
    <citation type="journal article" date="2004" name="Nat. Genet.">
        <title>Complete sequencing and characterization of 21,243 full-length human cDNAs.</title>
        <authorList>
            <person name="Ota T."/>
            <person name="Suzuki Y."/>
            <person name="Nishikawa T."/>
            <person name="Otsuki T."/>
            <person name="Sugiyama T."/>
            <person name="Irie R."/>
            <person name="Wakamatsu A."/>
            <person name="Hayashi K."/>
            <person name="Sato H."/>
            <person name="Nagai K."/>
            <person name="Kimura K."/>
            <person name="Makita H."/>
            <person name="Sekine M."/>
            <person name="Obayashi M."/>
            <person name="Nishi T."/>
            <person name="Shibahara T."/>
            <person name="Tanaka T."/>
            <person name="Ishii S."/>
            <person name="Yamamoto J."/>
            <person name="Saito K."/>
            <person name="Kawai Y."/>
            <person name="Isono Y."/>
            <person name="Nakamura Y."/>
            <person name="Nagahari K."/>
            <person name="Murakami K."/>
            <person name="Yasuda T."/>
            <person name="Iwayanagi T."/>
            <person name="Wagatsuma M."/>
            <person name="Shiratori A."/>
            <person name="Sudo H."/>
            <person name="Hosoiri T."/>
            <person name="Kaku Y."/>
            <person name="Kodaira H."/>
            <person name="Kondo H."/>
            <person name="Sugawara M."/>
            <person name="Takahashi M."/>
            <person name="Kanda K."/>
            <person name="Yokoi T."/>
            <person name="Furuya T."/>
            <person name="Kikkawa E."/>
            <person name="Omura Y."/>
            <person name="Abe K."/>
            <person name="Kamihara K."/>
            <person name="Katsuta N."/>
            <person name="Sato K."/>
            <person name="Tanikawa M."/>
            <person name="Yamazaki M."/>
            <person name="Ninomiya K."/>
            <person name="Ishibashi T."/>
            <person name="Yamashita H."/>
            <person name="Murakawa K."/>
            <person name="Fujimori K."/>
            <person name="Tanai H."/>
            <person name="Kimata M."/>
            <person name="Watanabe M."/>
            <person name="Hiraoka S."/>
            <person name="Chiba Y."/>
            <person name="Ishida S."/>
            <person name="Ono Y."/>
            <person name="Takiguchi S."/>
            <person name="Watanabe S."/>
            <person name="Yosida M."/>
            <person name="Hotuta T."/>
            <person name="Kusano J."/>
            <person name="Kanehori K."/>
            <person name="Takahashi-Fujii A."/>
            <person name="Hara H."/>
            <person name="Tanase T.-O."/>
            <person name="Nomura Y."/>
            <person name="Togiya S."/>
            <person name="Komai F."/>
            <person name="Hara R."/>
            <person name="Takeuchi K."/>
            <person name="Arita M."/>
            <person name="Imose N."/>
            <person name="Musashino K."/>
            <person name="Yuuki H."/>
            <person name="Oshima A."/>
            <person name="Sasaki N."/>
            <person name="Aotsuka S."/>
            <person name="Yoshikawa Y."/>
            <person name="Matsunawa H."/>
            <person name="Ichihara T."/>
            <person name="Shiohata N."/>
            <person name="Sano S."/>
            <person name="Moriya S."/>
            <person name="Momiyama H."/>
            <person name="Satoh N."/>
            <person name="Takami S."/>
            <person name="Terashima Y."/>
            <person name="Suzuki O."/>
            <person name="Nakagawa S."/>
            <person name="Senoh A."/>
            <person name="Mizoguchi H."/>
            <person name="Goto Y."/>
            <person name="Shimizu F."/>
            <person name="Wakebe H."/>
            <person name="Hishigaki H."/>
            <person name="Watanabe T."/>
            <person name="Sugiyama A."/>
            <person name="Takemoto M."/>
            <person name="Kawakami B."/>
            <person name="Yamazaki M."/>
            <person name="Watanabe K."/>
            <person name="Kumagai A."/>
            <person name="Itakura S."/>
            <person name="Fukuzumi Y."/>
            <person name="Fujimori Y."/>
            <person name="Komiyama M."/>
            <person name="Tashiro H."/>
            <person name="Tanigami A."/>
            <person name="Fujiwara T."/>
            <person name="Ono T."/>
            <person name="Yamada K."/>
            <person name="Fujii Y."/>
            <person name="Ozaki K."/>
            <person name="Hirao M."/>
            <person name="Ohmori Y."/>
            <person name="Kawabata A."/>
            <person name="Hikiji T."/>
            <person name="Kobatake N."/>
            <person name="Inagaki H."/>
            <person name="Ikema Y."/>
            <person name="Okamoto S."/>
            <person name="Okitani R."/>
            <person name="Kawakami T."/>
            <person name="Noguchi S."/>
            <person name="Itoh T."/>
            <person name="Shigeta K."/>
            <person name="Senba T."/>
            <person name="Matsumura K."/>
            <person name="Nakajima Y."/>
            <person name="Mizuno T."/>
            <person name="Morinaga M."/>
            <person name="Sasaki M."/>
            <person name="Togashi T."/>
            <person name="Oyama M."/>
            <person name="Hata H."/>
            <person name="Watanabe M."/>
            <person name="Komatsu T."/>
            <person name="Mizushima-Sugano J."/>
            <person name="Satoh T."/>
            <person name="Shirai Y."/>
            <person name="Takahashi Y."/>
            <person name="Nakagawa K."/>
            <person name="Okumura K."/>
            <person name="Nagase T."/>
            <person name="Nomura N."/>
            <person name="Kikuchi H."/>
            <person name="Masuho Y."/>
            <person name="Yamashita R."/>
            <person name="Nakai K."/>
            <person name="Yada T."/>
            <person name="Nakamura Y."/>
            <person name="Ohara O."/>
            <person name="Isogai T."/>
            <person name="Sugano S."/>
        </authorList>
    </citation>
    <scope>NUCLEOTIDE SEQUENCE [LARGE SCALE MRNA]</scope>
    <source>
        <tissue>Brain</tissue>
    </source>
</reference>
<reference key="2">
    <citation type="journal article" date="2004" name="Nature">
        <title>The DNA sequence and biology of human chromosome 19.</title>
        <authorList>
            <person name="Grimwood J."/>
            <person name="Gordon L.A."/>
            <person name="Olsen A.S."/>
            <person name="Terry A."/>
            <person name="Schmutz J."/>
            <person name="Lamerdin J.E."/>
            <person name="Hellsten U."/>
            <person name="Goodstein D."/>
            <person name="Couronne O."/>
            <person name="Tran-Gyamfi M."/>
            <person name="Aerts A."/>
            <person name="Altherr M."/>
            <person name="Ashworth L."/>
            <person name="Bajorek E."/>
            <person name="Black S."/>
            <person name="Branscomb E."/>
            <person name="Caenepeel S."/>
            <person name="Carrano A.V."/>
            <person name="Caoile C."/>
            <person name="Chan Y.M."/>
            <person name="Christensen M."/>
            <person name="Cleland C.A."/>
            <person name="Copeland A."/>
            <person name="Dalin E."/>
            <person name="Dehal P."/>
            <person name="Denys M."/>
            <person name="Detter J.C."/>
            <person name="Escobar J."/>
            <person name="Flowers D."/>
            <person name="Fotopulos D."/>
            <person name="Garcia C."/>
            <person name="Georgescu A.M."/>
            <person name="Glavina T."/>
            <person name="Gomez M."/>
            <person name="Gonzales E."/>
            <person name="Groza M."/>
            <person name="Hammon N."/>
            <person name="Hawkins T."/>
            <person name="Haydu L."/>
            <person name="Ho I."/>
            <person name="Huang W."/>
            <person name="Israni S."/>
            <person name="Jett J."/>
            <person name="Kadner K."/>
            <person name="Kimball H."/>
            <person name="Kobayashi A."/>
            <person name="Larionov V."/>
            <person name="Leem S.-H."/>
            <person name="Lopez F."/>
            <person name="Lou Y."/>
            <person name="Lowry S."/>
            <person name="Malfatti S."/>
            <person name="Martinez D."/>
            <person name="McCready P.M."/>
            <person name="Medina C."/>
            <person name="Morgan J."/>
            <person name="Nelson K."/>
            <person name="Nolan M."/>
            <person name="Ovcharenko I."/>
            <person name="Pitluck S."/>
            <person name="Pollard M."/>
            <person name="Popkie A.P."/>
            <person name="Predki P."/>
            <person name="Quan G."/>
            <person name="Ramirez L."/>
            <person name="Rash S."/>
            <person name="Retterer J."/>
            <person name="Rodriguez A."/>
            <person name="Rogers S."/>
            <person name="Salamov A."/>
            <person name="Salazar A."/>
            <person name="She X."/>
            <person name="Smith D."/>
            <person name="Slezak T."/>
            <person name="Solovyev V."/>
            <person name="Thayer N."/>
            <person name="Tice H."/>
            <person name="Tsai M."/>
            <person name="Ustaszewska A."/>
            <person name="Vo N."/>
            <person name="Wagner M."/>
            <person name="Wheeler J."/>
            <person name="Wu K."/>
            <person name="Xie G."/>
            <person name="Yang J."/>
            <person name="Dubchak I."/>
            <person name="Furey T.S."/>
            <person name="DeJong P."/>
            <person name="Dickson M."/>
            <person name="Gordon D."/>
            <person name="Eichler E.E."/>
            <person name="Pennacchio L.A."/>
            <person name="Richardson P."/>
            <person name="Stubbs L."/>
            <person name="Rokhsar D.S."/>
            <person name="Myers R.M."/>
            <person name="Rubin E.M."/>
            <person name="Lucas S.M."/>
        </authorList>
    </citation>
    <scope>NUCLEOTIDE SEQUENCE [LARGE SCALE GENOMIC DNA]</scope>
</reference>
<reference key="3">
    <citation type="journal article" date="2004" name="Genome Res.">
        <title>The status, quality, and expansion of the NIH full-length cDNA project: the Mammalian Gene Collection (MGC).</title>
        <authorList>
            <consortium name="The MGC Project Team"/>
        </authorList>
    </citation>
    <scope>NUCLEOTIDE SEQUENCE [LARGE SCALE MRNA] OF 334-970</scope>
    <source>
        <tissue>Eye</tissue>
    </source>
</reference>
<reference key="4">
    <citation type="journal article" date="2017" name="Nat. Struct. Mol. Biol.">
        <title>Site-specific mapping of the human SUMO proteome reveals co-modification with phosphorylation.</title>
        <authorList>
            <person name="Hendriks I.A."/>
            <person name="Lyon D."/>
            <person name="Young C."/>
            <person name="Jensen L.J."/>
            <person name="Vertegaal A.C."/>
            <person name="Nielsen M.L."/>
        </authorList>
    </citation>
    <scope>SUMOYLATION [LARGE SCALE ANALYSIS] AT LYS-205</scope>
    <scope>IDENTIFICATION BY MASS SPECTROMETRY [LARGE SCALE ANALYSIS]</scope>
</reference>
<accession>Q96IR2</accession>
<proteinExistence type="evidence at protein level"/>
<keyword id="KW-0238">DNA-binding</keyword>
<keyword id="KW-1017">Isopeptide bond</keyword>
<keyword id="KW-0479">Metal-binding</keyword>
<keyword id="KW-0539">Nucleus</keyword>
<keyword id="KW-1267">Proteomics identification</keyword>
<keyword id="KW-1185">Reference proteome</keyword>
<keyword id="KW-0677">Repeat</keyword>
<keyword id="KW-0804">Transcription</keyword>
<keyword id="KW-0805">Transcription regulation</keyword>
<keyword id="KW-0832">Ubl conjugation</keyword>
<keyword id="KW-0862">Zinc</keyword>
<keyword id="KW-0863">Zinc-finger</keyword>
<feature type="chain" id="PRO_0000349878" description="Zinc finger protein 845">
    <location>
        <begin position="1"/>
        <end position="970"/>
    </location>
</feature>
<feature type="domain" description="KRAB" evidence="3">
    <location>
        <begin position="8"/>
        <end position="81"/>
    </location>
</feature>
<feature type="zinc finger region" description="C2H2-type 1; degenerate" evidence="2">
    <location>
        <begin position="215"/>
        <end position="237"/>
    </location>
</feature>
<feature type="zinc finger region" description="C2H2-type 2" evidence="2">
    <location>
        <begin position="243"/>
        <end position="265"/>
    </location>
</feature>
<feature type="zinc finger region" description="C2H2-type 3" evidence="2">
    <location>
        <begin position="271"/>
        <end position="293"/>
    </location>
</feature>
<feature type="zinc finger region" description="C2H2-type 4" evidence="2">
    <location>
        <begin position="299"/>
        <end position="321"/>
    </location>
</feature>
<feature type="zinc finger region" description="C2H2-type 5" evidence="2">
    <location>
        <begin position="327"/>
        <end position="349"/>
    </location>
</feature>
<feature type="zinc finger region" description="C2H2-type 6" evidence="2">
    <location>
        <begin position="355"/>
        <end position="377"/>
    </location>
</feature>
<feature type="zinc finger region" description="C2H2-type 7" evidence="2">
    <location>
        <begin position="383"/>
        <end position="405"/>
    </location>
</feature>
<feature type="zinc finger region" description="C2H2-type 8" evidence="2">
    <location>
        <begin position="411"/>
        <end position="433"/>
    </location>
</feature>
<feature type="zinc finger region" description="C2H2-type 9" evidence="2">
    <location>
        <begin position="439"/>
        <end position="461"/>
    </location>
</feature>
<feature type="zinc finger region" description="C2H2-type 10" evidence="2">
    <location>
        <begin position="467"/>
        <end position="489"/>
    </location>
</feature>
<feature type="zinc finger region" description="C2H2-type 11" evidence="2">
    <location>
        <begin position="495"/>
        <end position="517"/>
    </location>
</feature>
<feature type="zinc finger region" description="C2H2-type 12" evidence="2">
    <location>
        <begin position="523"/>
        <end position="545"/>
    </location>
</feature>
<feature type="zinc finger region" description="C2H2-type 13" evidence="2">
    <location>
        <begin position="551"/>
        <end position="573"/>
    </location>
</feature>
<feature type="zinc finger region" description="C2H2-type 14" evidence="2">
    <location>
        <begin position="579"/>
        <end position="601"/>
    </location>
</feature>
<feature type="zinc finger region" description="C2H2-type 15" evidence="2">
    <location>
        <begin position="607"/>
        <end position="629"/>
    </location>
</feature>
<feature type="zinc finger region" description="C2H2-type 16" evidence="2">
    <location>
        <begin position="635"/>
        <end position="657"/>
    </location>
</feature>
<feature type="zinc finger region" description="C2H2-type 17" evidence="2">
    <location>
        <begin position="663"/>
        <end position="685"/>
    </location>
</feature>
<feature type="zinc finger region" description="C2H2-type 18" evidence="2">
    <location>
        <begin position="691"/>
        <end position="713"/>
    </location>
</feature>
<feature type="zinc finger region" description="C2H2-type 19" evidence="2">
    <location>
        <begin position="719"/>
        <end position="741"/>
    </location>
</feature>
<feature type="zinc finger region" description="C2H2-type 20" evidence="2">
    <location>
        <begin position="747"/>
        <end position="769"/>
    </location>
</feature>
<feature type="zinc finger region" description="C2H2-type 21" evidence="2">
    <location>
        <begin position="775"/>
        <end position="797"/>
    </location>
</feature>
<feature type="zinc finger region" description="C2H2-type 22" evidence="2">
    <location>
        <begin position="803"/>
        <end position="825"/>
    </location>
</feature>
<feature type="zinc finger region" description="C2H2-type 23" evidence="2">
    <location>
        <begin position="831"/>
        <end position="853"/>
    </location>
</feature>
<feature type="zinc finger region" description="C2H2-type 24" evidence="2">
    <location>
        <begin position="859"/>
        <end position="881"/>
    </location>
</feature>
<feature type="zinc finger region" description="C2H2-type 25" evidence="2">
    <location>
        <begin position="887"/>
        <end position="909"/>
    </location>
</feature>
<feature type="zinc finger region" description="C2H2-type 26" evidence="2">
    <location>
        <begin position="915"/>
        <end position="937"/>
    </location>
</feature>
<feature type="zinc finger region" description="C2H2-type 27" evidence="2">
    <location>
        <begin position="943"/>
        <end position="965"/>
    </location>
</feature>
<feature type="cross-link" description="Glycyl lysine isopeptide (Lys-Gly) (interchain with G-Cter in SUMO2)" evidence="5">
    <location>
        <position position="205"/>
    </location>
</feature>
<feature type="sequence conflict" description="In Ref. 3; AAH07307." evidence="4" ref="3">
    <original>L</original>
    <variation>F</variation>
    <location>
        <position position="348"/>
    </location>
</feature>
<feature type="sequence conflict" description="In Ref. 1; BAG58121." evidence="4" ref="1">
    <original>S</original>
    <variation>F</variation>
    <location>
        <position position="537"/>
    </location>
</feature>
<feature type="sequence conflict" description="In Ref. 1; BAG58121." evidence="4" ref="1">
    <location>
        <begin position="662"/>
        <end position="745"/>
    </location>
</feature>
<feature type="sequence conflict" description="In Ref. 3; AAH07307." evidence="4" ref="3">
    <original>E</original>
    <variation>D</variation>
    <location>
        <position position="807"/>
    </location>
</feature>
<dbReference type="EMBL" id="AK295079">
    <property type="protein sequence ID" value="BAG58121.1"/>
    <property type="molecule type" value="mRNA"/>
</dbReference>
<dbReference type="EMBL" id="AC010467">
    <property type="status" value="NOT_ANNOTATED_CDS"/>
    <property type="molecule type" value="Genomic_DNA"/>
</dbReference>
<dbReference type="EMBL" id="BC007307">
    <property type="protein sequence ID" value="AAH07307.1"/>
    <property type="molecule type" value="mRNA"/>
</dbReference>
<dbReference type="CCDS" id="CCDS46170.1"/>
<dbReference type="RefSeq" id="NP_001308451.1">
    <property type="nucleotide sequence ID" value="NM_001321522.2"/>
</dbReference>
<dbReference type="RefSeq" id="NP_001308452.1">
    <property type="nucleotide sequence ID" value="NM_001321523.2"/>
</dbReference>
<dbReference type="RefSeq" id="NP_001308453.1">
    <property type="nucleotide sequence ID" value="NM_001321524.2"/>
</dbReference>
<dbReference type="RefSeq" id="NP_612383.1">
    <property type="nucleotide sequence ID" value="NM_138374.3"/>
</dbReference>
<dbReference type="RefSeq" id="XP_047295633.1">
    <property type="nucleotide sequence ID" value="XM_047439677.1"/>
</dbReference>
<dbReference type="SMR" id="Q96IR2"/>
<dbReference type="BioGRID" id="124863">
    <property type="interactions" value="37"/>
</dbReference>
<dbReference type="FunCoup" id="Q96IR2">
    <property type="interactions" value="227"/>
</dbReference>
<dbReference type="IntAct" id="Q96IR2">
    <property type="interactions" value="23"/>
</dbReference>
<dbReference type="STRING" id="9606.ENSP00000388311"/>
<dbReference type="iPTMnet" id="Q96IR2"/>
<dbReference type="PhosphoSitePlus" id="Q96IR2"/>
<dbReference type="BioMuta" id="ZNF845"/>
<dbReference type="DMDM" id="296453067"/>
<dbReference type="jPOST" id="Q96IR2"/>
<dbReference type="MassIVE" id="Q96IR2"/>
<dbReference type="PaxDb" id="9606-ENSP00000388311"/>
<dbReference type="PeptideAtlas" id="Q96IR2"/>
<dbReference type="ProteomicsDB" id="76846"/>
<dbReference type="Pumba" id="Q96IR2"/>
<dbReference type="Antibodypedia" id="32690">
    <property type="antibodies" value="68 antibodies from 14 providers"/>
</dbReference>
<dbReference type="DNASU" id="91664"/>
<dbReference type="Ensembl" id="ENST00000458035.3">
    <property type="protein sequence ID" value="ENSP00000388311.1"/>
    <property type="gene ID" value="ENSG00000213799.13"/>
</dbReference>
<dbReference type="Ensembl" id="ENST00000595091.6">
    <property type="protein sequence ID" value="ENSP00000470005.1"/>
    <property type="gene ID" value="ENSG00000213799.13"/>
</dbReference>
<dbReference type="GeneID" id="91664"/>
<dbReference type="KEGG" id="hsa:91664"/>
<dbReference type="MANE-Select" id="ENST00000458035.3">
    <property type="protein sequence ID" value="ENSP00000388311.1"/>
    <property type="RefSeq nucleotide sequence ID" value="NM_138374.3"/>
    <property type="RefSeq protein sequence ID" value="NP_612383.1"/>
</dbReference>
<dbReference type="UCSC" id="uc010ydv.1">
    <property type="organism name" value="human"/>
</dbReference>
<dbReference type="AGR" id="HGNC:25112"/>
<dbReference type="CTD" id="91664"/>
<dbReference type="GeneCards" id="ZNF845"/>
<dbReference type="HGNC" id="HGNC:25112">
    <property type="gene designation" value="ZNF845"/>
</dbReference>
<dbReference type="HPA" id="ENSG00000213799">
    <property type="expression patterns" value="Low tissue specificity"/>
</dbReference>
<dbReference type="neXtProt" id="NX_Q96IR2"/>
<dbReference type="OpenTargets" id="ENSG00000213799"/>
<dbReference type="PharmGKB" id="PA162410863"/>
<dbReference type="VEuPathDB" id="HostDB:ENSG00000213799"/>
<dbReference type="eggNOG" id="KOG1721">
    <property type="taxonomic scope" value="Eukaryota"/>
</dbReference>
<dbReference type="GeneTree" id="ENSGT00940000155274"/>
<dbReference type="HOGENOM" id="CLU_002678_17_0_1"/>
<dbReference type="InParanoid" id="Q96IR2"/>
<dbReference type="OMA" id="PYKRNDC"/>
<dbReference type="OrthoDB" id="9411774at2759"/>
<dbReference type="PAN-GO" id="Q96IR2">
    <property type="GO annotations" value="4 GO annotations based on evolutionary models"/>
</dbReference>
<dbReference type="PhylomeDB" id="Q96IR2"/>
<dbReference type="TreeFam" id="TF343410"/>
<dbReference type="PathwayCommons" id="Q96IR2"/>
<dbReference type="SignaLink" id="Q96IR2"/>
<dbReference type="BioGRID-ORCS" id="91664">
    <property type="hits" value="14 hits in 1088 CRISPR screens"/>
</dbReference>
<dbReference type="ChiTaRS" id="ZNF845">
    <property type="organism name" value="human"/>
</dbReference>
<dbReference type="GenomeRNAi" id="91664"/>
<dbReference type="Pharos" id="Q96IR2">
    <property type="development level" value="Tdark"/>
</dbReference>
<dbReference type="PRO" id="PR:Q96IR2"/>
<dbReference type="Proteomes" id="UP000005640">
    <property type="component" value="Chromosome 19"/>
</dbReference>
<dbReference type="RNAct" id="Q96IR2">
    <property type="molecule type" value="protein"/>
</dbReference>
<dbReference type="Bgee" id="ENSG00000213799">
    <property type="expression patterns" value="Expressed in thymus and 113 other cell types or tissues"/>
</dbReference>
<dbReference type="GO" id="GO:0005634">
    <property type="term" value="C:nucleus"/>
    <property type="evidence" value="ECO:0000318"/>
    <property type="project" value="GO_Central"/>
</dbReference>
<dbReference type="GO" id="GO:0003677">
    <property type="term" value="F:DNA binding"/>
    <property type="evidence" value="ECO:0007669"/>
    <property type="project" value="UniProtKB-KW"/>
</dbReference>
<dbReference type="GO" id="GO:0008270">
    <property type="term" value="F:zinc ion binding"/>
    <property type="evidence" value="ECO:0007669"/>
    <property type="project" value="UniProtKB-KW"/>
</dbReference>
<dbReference type="GO" id="GO:0006357">
    <property type="term" value="P:regulation of transcription by RNA polymerase II"/>
    <property type="evidence" value="ECO:0000318"/>
    <property type="project" value="GO_Central"/>
</dbReference>
<dbReference type="CDD" id="cd07765">
    <property type="entry name" value="KRAB_A-box"/>
    <property type="match status" value="1"/>
</dbReference>
<dbReference type="FunFam" id="3.30.160.60:FF:004137">
    <property type="match status" value="2"/>
</dbReference>
<dbReference type="FunFam" id="3.30.160.60:FF:000295">
    <property type="entry name" value="zinc finger protein 19"/>
    <property type="match status" value="5"/>
</dbReference>
<dbReference type="FunFam" id="3.30.160.60:FF:000688">
    <property type="entry name" value="zinc finger protein 197 isoform X1"/>
    <property type="match status" value="1"/>
</dbReference>
<dbReference type="FunFam" id="3.30.160.60:FF:000992">
    <property type="entry name" value="Zinc finger protein 320"/>
    <property type="match status" value="1"/>
</dbReference>
<dbReference type="FunFam" id="3.30.160.60:FF:002343">
    <property type="entry name" value="Zinc finger protein 33A"/>
    <property type="match status" value="5"/>
</dbReference>
<dbReference type="FunFam" id="3.30.160.60:FF:002402">
    <property type="entry name" value="Zinc finger protein 347"/>
    <property type="match status" value="2"/>
</dbReference>
<dbReference type="FunFam" id="3.30.160.60:FF:000016">
    <property type="entry name" value="zinc finger protein 37 homolog"/>
    <property type="match status" value="3"/>
</dbReference>
<dbReference type="FunFam" id="3.30.160.60:FF:002090">
    <property type="entry name" value="Zinc finger protein 473"/>
    <property type="match status" value="2"/>
</dbReference>
<dbReference type="FunFam" id="3.30.160.60:FF:001270">
    <property type="entry name" value="zinc finger protein 583 isoform X1"/>
    <property type="match status" value="1"/>
</dbReference>
<dbReference type="FunFam" id="3.30.160.60:FF:001627">
    <property type="entry name" value="Zinc finger protein 655"/>
    <property type="match status" value="1"/>
</dbReference>
<dbReference type="FunFam" id="3.30.160.60:FF:000290">
    <property type="entry name" value="Zinc finger protein 697 isoform X1"/>
    <property type="match status" value="1"/>
</dbReference>
<dbReference type="FunFam" id="3.30.160.60:FF:002289">
    <property type="entry name" value="Zinc finger protein 813"/>
    <property type="match status" value="1"/>
</dbReference>
<dbReference type="FunFam" id="3.30.160.60:FF:002292">
    <property type="entry name" value="Zinc finger protein 816"/>
    <property type="match status" value="1"/>
</dbReference>
<dbReference type="FunFam" id="3.30.160.60:FF:002761">
    <property type="entry name" value="Zinc finger protein 845"/>
    <property type="match status" value="1"/>
</dbReference>
<dbReference type="FunFam" id="3.30.160.60:FF:003261">
    <property type="entry name" value="Zinc finger protein 860"/>
    <property type="match status" value="1"/>
</dbReference>
<dbReference type="FunFam" id="3.30.160.60:FF:000416">
    <property type="entry name" value="zinc finger protein 879 isoform X1"/>
    <property type="match status" value="1"/>
</dbReference>
<dbReference type="Gene3D" id="6.10.140.140">
    <property type="match status" value="1"/>
</dbReference>
<dbReference type="Gene3D" id="3.30.160.60">
    <property type="entry name" value="Classic Zinc Finger"/>
    <property type="match status" value="27"/>
</dbReference>
<dbReference type="InterPro" id="IPR001909">
    <property type="entry name" value="KRAB"/>
</dbReference>
<dbReference type="InterPro" id="IPR036051">
    <property type="entry name" value="KRAB_dom_sf"/>
</dbReference>
<dbReference type="InterPro" id="IPR036236">
    <property type="entry name" value="Znf_C2H2_sf"/>
</dbReference>
<dbReference type="InterPro" id="IPR013087">
    <property type="entry name" value="Znf_C2H2_type"/>
</dbReference>
<dbReference type="PANTHER" id="PTHR23226:SF416">
    <property type="entry name" value="FI01424P"/>
    <property type="match status" value="1"/>
</dbReference>
<dbReference type="PANTHER" id="PTHR23226">
    <property type="entry name" value="ZINC FINGER AND SCAN DOMAIN-CONTAINING"/>
    <property type="match status" value="1"/>
</dbReference>
<dbReference type="Pfam" id="PF01352">
    <property type="entry name" value="KRAB"/>
    <property type="match status" value="1"/>
</dbReference>
<dbReference type="Pfam" id="PF00096">
    <property type="entry name" value="zf-C2H2"/>
    <property type="match status" value="22"/>
</dbReference>
<dbReference type="Pfam" id="PF13465">
    <property type="entry name" value="zf-H2C2_2"/>
    <property type="match status" value="1"/>
</dbReference>
<dbReference type="SMART" id="SM00349">
    <property type="entry name" value="KRAB"/>
    <property type="match status" value="1"/>
</dbReference>
<dbReference type="SMART" id="SM00355">
    <property type="entry name" value="ZnF_C2H2"/>
    <property type="match status" value="27"/>
</dbReference>
<dbReference type="SUPFAM" id="SSF57667">
    <property type="entry name" value="beta-beta-alpha zinc fingers"/>
    <property type="match status" value="16"/>
</dbReference>
<dbReference type="SUPFAM" id="SSF109640">
    <property type="entry name" value="KRAB domain (Kruppel-associated box)"/>
    <property type="match status" value="1"/>
</dbReference>
<dbReference type="PROSITE" id="PS50805">
    <property type="entry name" value="KRAB"/>
    <property type="match status" value="1"/>
</dbReference>
<dbReference type="PROSITE" id="PS00028">
    <property type="entry name" value="ZINC_FINGER_C2H2_1"/>
    <property type="match status" value="26"/>
</dbReference>
<dbReference type="PROSITE" id="PS50157">
    <property type="entry name" value="ZINC_FINGER_C2H2_2"/>
    <property type="match status" value="27"/>
</dbReference>